<feature type="chain" id="PRO_1000002673" description="UDP-N-acetylglucosamine--N-acetylmuramyl-(pentapeptide) pyrophosphoryl-undecaprenol N-acetylglucosamine transferase">
    <location>
        <begin position="1"/>
        <end position="355"/>
    </location>
</feature>
<feature type="binding site" evidence="1">
    <location>
        <begin position="13"/>
        <end position="15"/>
    </location>
    <ligand>
        <name>UDP-N-acetyl-alpha-D-glucosamine</name>
        <dbReference type="ChEBI" id="CHEBI:57705"/>
    </ligand>
</feature>
<feature type="binding site" evidence="1">
    <location>
        <position position="125"/>
    </location>
    <ligand>
        <name>UDP-N-acetyl-alpha-D-glucosamine</name>
        <dbReference type="ChEBI" id="CHEBI:57705"/>
    </ligand>
</feature>
<feature type="binding site" evidence="1">
    <location>
        <position position="162"/>
    </location>
    <ligand>
        <name>UDP-N-acetyl-alpha-D-glucosamine</name>
        <dbReference type="ChEBI" id="CHEBI:57705"/>
    </ligand>
</feature>
<feature type="binding site" evidence="1">
    <location>
        <position position="190"/>
    </location>
    <ligand>
        <name>UDP-N-acetyl-alpha-D-glucosamine</name>
        <dbReference type="ChEBI" id="CHEBI:57705"/>
    </ligand>
</feature>
<feature type="binding site" evidence="1">
    <location>
        <position position="244"/>
    </location>
    <ligand>
        <name>UDP-N-acetyl-alpha-D-glucosamine</name>
        <dbReference type="ChEBI" id="CHEBI:57705"/>
    </ligand>
</feature>
<feature type="binding site" evidence="1">
    <location>
        <position position="289"/>
    </location>
    <ligand>
        <name>UDP-N-acetyl-alpha-D-glucosamine</name>
        <dbReference type="ChEBI" id="CHEBI:57705"/>
    </ligand>
</feature>
<evidence type="ECO:0000255" key="1">
    <source>
        <dbReference type="HAMAP-Rule" id="MF_00033"/>
    </source>
</evidence>
<dbReference type="EC" id="2.4.1.227" evidence="1"/>
<dbReference type="EMBL" id="AM421808">
    <property type="protein sequence ID" value="CAM10917.1"/>
    <property type="molecule type" value="Genomic_DNA"/>
</dbReference>
<dbReference type="RefSeq" id="WP_002227035.1">
    <property type="nucleotide sequence ID" value="NC_008767.1"/>
</dbReference>
<dbReference type="SMR" id="A1KVL3"/>
<dbReference type="CAZy" id="GT28">
    <property type="family name" value="Glycosyltransferase Family 28"/>
</dbReference>
<dbReference type="KEGG" id="nmc:NMC1742"/>
<dbReference type="HOGENOM" id="CLU_037404_2_0_4"/>
<dbReference type="UniPathway" id="UPA00219"/>
<dbReference type="Proteomes" id="UP000002286">
    <property type="component" value="Chromosome"/>
</dbReference>
<dbReference type="GO" id="GO:0005886">
    <property type="term" value="C:plasma membrane"/>
    <property type="evidence" value="ECO:0007669"/>
    <property type="project" value="UniProtKB-SubCell"/>
</dbReference>
<dbReference type="GO" id="GO:0051991">
    <property type="term" value="F:UDP-N-acetyl-D-glucosamine:N-acetylmuramoyl-L-alanyl-D-glutamyl-meso-2,6-diaminopimelyl-D-alanyl-D-alanine-diphosphoundecaprenol 4-beta-N-acetylglucosaminlytransferase activity"/>
    <property type="evidence" value="ECO:0007669"/>
    <property type="project" value="RHEA"/>
</dbReference>
<dbReference type="GO" id="GO:0050511">
    <property type="term" value="F:undecaprenyldiphospho-muramoylpentapeptide beta-N-acetylglucosaminyltransferase activity"/>
    <property type="evidence" value="ECO:0007669"/>
    <property type="project" value="UniProtKB-UniRule"/>
</dbReference>
<dbReference type="GO" id="GO:0005975">
    <property type="term" value="P:carbohydrate metabolic process"/>
    <property type="evidence" value="ECO:0007669"/>
    <property type="project" value="InterPro"/>
</dbReference>
<dbReference type="GO" id="GO:0051301">
    <property type="term" value="P:cell division"/>
    <property type="evidence" value="ECO:0007669"/>
    <property type="project" value="UniProtKB-KW"/>
</dbReference>
<dbReference type="GO" id="GO:0071555">
    <property type="term" value="P:cell wall organization"/>
    <property type="evidence" value="ECO:0007669"/>
    <property type="project" value="UniProtKB-KW"/>
</dbReference>
<dbReference type="GO" id="GO:0030259">
    <property type="term" value="P:lipid glycosylation"/>
    <property type="evidence" value="ECO:0007669"/>
    <property type="project" value="UniProtKB-UniRule"/>
</dbReference>
<dbReference type="GO" id="GO:0009252">
    <property type="term" value="P:peptidoglycan biosynthetic process"/>
    <property type="evidence" value="ECO:0007669"/>
    <property type="project" value="UniProtKB-UniRule"/>
</dbReference>
<dbReference type="GO" id="GO:0008360">
    <property type="term" value="P:regulation of cell shape"/>
    <property type="evidence" value="ECO:0007669"/>
    <property type="project" value="UniProtKB-KW"/>
</dbReference>
<dbReference type="CDD" id="cd03785">
    <property type="entry name" value="GT28_MurG"/>
    <property type="match status" value="1"/>
</dbReference>
<dbReference type="Gene3D" id="3.40.50.2000">
    <property type="entry name" value="Glycogen Phosphorylase B"/>
    <property type="match status" value="2"/>
</dbReference>
<dbReference type="HAMAP" id="MF_00033">
    <property type="entry name" value="MurG"/>
    <property type="match status" value="1"/>
</dbReference>
<dbReference type="InterPro" id="IPR006009">
    <property type="entry name" value="GlcNAc_MurG"/>
</dbReference>
<dbReference type="InterPro" id="IPR007235">
    <property type="entry name" value="Glyco_trans_28_C"/>
</dbReference>
<dbReference type="InterPro" id="IPR004276">
    <property type="entry name" value="GlycoTrans_28_N"/>
</dbReference>
<dbReference type="NCBIfam" id="TIGR01133">
    <property type="entry name" value="murG"/>
    <property type="match status" value="1"/>
</dbReference>
<dbReference type="PANTHER" id="PTHR21015:SF22">
    <property type="entry name" value="GLYCOSYLTRANSFERASE"/>
    <property type="match status" value="1"/>
</dbReference>
<dbReference type="PANTHER" id="PTHR21015">
    <property type="entry name" value="UDP-N-ACETYLGLUCOSAMINE--N-ACETYLMURAMYL-(PENTAPEPTIDE) PYROPHOSPHORYL-UNDECAPRENOL N-ACETYLGLUCOSAMINE TRANSFERASE 1"/>
    <property type="match status" value="1"/>
</dbReference>
<dbReference type="Pfam" id="PF04101">
    <property type="entry name" value="Glyco_tran_28_C"/>
    <property type="match status" value="1"/>
</dbReference>
<dbReference type="Pfam" id="PF03033">
    <property type="entry name" value="Glyco_transf_28"/>
    <property type="match status" value="1"/>
</dbReference>
<dbReference type="SUPFAM" id="SSF53756">
    <property type="entry name" value="UDP-Glycosyltransferase/glycogen phosphorylase"/>
    <property type="match status" value="1"/>
</dbReference>
<comment type="function">
    <text evidence="1">Cell wall formation. Catalyzes the transfer of a GlcNAc subunit on undecaprenyl-pyrophosphoryl-MurNAc-pentapeptide (lipid intermediate I) to form undecaprenyl-pyrophosphoryl-MurNAc-(pentapeptide)GlcNAc (lipid intermediate II).</text>
</comment>
<comment type="catalytic activity">
    <reaction evidence="1">
        <text>di-trans,octa-cis-undecaprenyl diphospho-N-acetyl-alpha-D-muramoyl-L-alanyl-D-glutamyl-meso-2,6-diaminopimeloyl-D-alanyl-D-alanine + UDP-N-acetyl-alpha-D-glucosamine = di-trans,octa-cis-undecaprenyl diphospho-[N-acetyl-alpha-D-glucosaminyl-(1-&gt;4)]-N-acetyl-alpha-D-muramoyl-L-alanyl-D-glutamyl-meso-2,6-diaminopimeloyl-D-alanyl-D-alanine + UDP + H(+)</text>
        <dbReference type="Rhea" id="RHEA:31227"/>
        <dbReference type="ChEBI" id="CHEBI:15378"/>
        <dbReference type="ChEBI" id="CHEBI:57705"/>
        <dbReference type="ChEBI" id="CHEBI:58223"/>
        <dbReference type="ChEBI" id="CHEBI:61387"/>
        <dbReference type="ChEBI" id="CHEBI:61388"/>
        <dbReference type="EC" id="2.4.1.227"/>
    </reaction>
</comment>
<comment type="pathway">
    <text evidence="1">Cell wall biogenesis; peptidoglycan biosynthesis.</text>
</comment>
<comment type="subcellular location">
    <subcellularLocation>
        <location evidence="1">Cell inner membrane</location>
        <topology evidence="1">Peripheral membrane protein</topology>
        <orientation evidence="1">Cytoplasmic side</orientation>
    </subcellularLocation>
</comment>
<comment type="similarity">
    <text evidence="1">Belongs to the glycosyltransferase 28 family. MurG subfamily.</text>
</comment>
<gene>
    <name evidence="1" type="primary">murG</name>
    <name type="ordered locus">NMC1742</name>
</gene>
<protein>
    <recommendedName>
        <fullName evidence="1">UDP-N-acetylglucosamine--N-acetylmuramyl-(pentapeptide) pyrophosphoryl-undecaprenol N-acetylglucosamine transferase</fullName>
        <ecNumber evidence="1">2.4.1.227</ecNumber>
    </recommendedName>
    <alternativeName>
        <fullName evidence="1">Undecaprenyl-PP-MurNAc-pentapeptide-UDPGlcNAc GlcNAc transferase</fullName>
    </alternativeName>
</protein>
<organism>
    <name type="scientific">Neisseria meningitidis serogroup C / serotype 2a (strain ATCC 700532 / DSM 15464 / FAM18)</name>
    <dbReference type="NCBI Taxonomy" id="272831"/>
    <lineage>
        <taxon>Bacteria</taxon>
        <taxon>Pseudomonadati</taxon>
        <taxon>Pseudomonadota</taxon>
        <taxon>Betaproteobacteria</taxon>
        <taxon>Neisseriales</taxon>
        <taxon>Neisseriaceae</taxon>
        <taxon>Neisseria</taxon>
    </lineage>
</organism>
<keyword id="KW-0131">Cell cycle</keyword>
<keyword id="KW-0132">Cell division</keyword>
<keyword id="KW-0997">Cell inner membrane</keyword>
<keyword id="KW-1003">Cell membrane</keyword>
<keyword id="KW-0133">Cell shape</keyword>
<keyword id="KW-0961">Cell wall biogenesis/degradation</keyword>
<keyword id="KW-0328">Glycosyltransferase</keyword>
<keyword id="KW-0472">Membrane</keyword>
<keyword id="KW-0573">Peptidoglycan synthesis</keyword>
<keyword id="KW-0808">Transferase</keyword>
<name>MURG_NEIMF</name>
<reference key="1">
    <citation type="journal article" date="2007" name="PLoS Genet.">
        <title>Meningococcal genetic variation mechanisms viewed through comparative analysis of serogroup C strain FAM18.</title>
        <authorList>
            <person name="Bentley S.D."/>
            <person name="Vernikos G.S."/>
            <person name="Snyder L.A.S."/>
            <person name="Churcher C."/>
            <person name="Arrowsmith C."/>
            <person name="Chillingworth T."/>
            <person name="Cronin A."/>
            <person name="Davis P.H."/>
            <person name="Holroyd N.E."/>
            <person name="Jagels K."/>
            <person name="Maddison M."/>
            <person name="Moule S."/>
            <person name="Rabbinowitsch E."/>
            <person name="Sharp S."/>
            <person name="Unwin L."/>
            <person name="Whitehead S."/>
            <person name="Quail M.A."/>
            <person name="Achtman M."/>
            <person name="Barrell B.G."/>
            <person name="Saunders N.J."/>
            <person name="Parkhill J."/>
        </authorList>
    </citation>
    <scope>NUCLEOTIDE SEQUENCE [LARGE SCALE GENOMIC DNA]</scope>
    <source>
        <strain>ATCC 700532 / DSM 15464 / FAM18</strain>
    </source>
</reference>
<sequence>MGGKTFMLMAGGTGGHIFPALAVADSLRARGHHVIWLGSKDSMEERIVPQYGIRLETLAIKGVRGNGIKRKLMLPVTLYQTVREAQRIIRKHRVECVIGFGGFVTFPGGLAAKLLGVPIVIHEQNAVAGLSNRHLSRWAKRVLYAFPKAFSHEGGLVGNPVRADISNLPVPAERFQGREGRLKILVVGGSLGADVLNKTVPQALALLPDDARPQMYHQSGRGKLGSLQADYDALGVKAECVEFITDMVSAYRDADLVICRAGALTIAELTAAGLGALLVPYPHAVDDHQTANARFMVQAEAGLLLPQTQLTAEKLAEILGSLNREKCLKWAENARTLALPHSADDVAEAAIACAA</sequence>
<proteinExistence type="inferred from homology"/>
<accession>A1KVL3</accession>